<comment type="function">
    <text evidence="1">Single strand-specific metallo-endoribonuclease involved in late-stage 70S ribosome quality control and in maturation of the 3' terminus of the 16S rRNA.</text>
</comment>
<comment type="cofactor">
    <cofactor evidence="1">
        <name>Zn(2+)</name>
        <dbReference type="ChEBI" id="CHEBI:29105"/>
    </cofactor>
    <text evidence="1">Binds 1 zinc ion.</text>
</comment>
<comment type="subcellular location">
    <subcellularLocation>
        <location evidence="1">Cytoplasm</location>
    </subcellularLocation>
</comment>
<comment type="similarity">
    <text evidence="1">Belongs to the endoribonuclease YbeY family.</text>
</comment>
<accession>A0RIS3</accession>
<evidence type="ECO:0000255" key="1">
    <source>
        <dbReference type="HAMAP-Rule" id="MF_00009"/>
    </source>
</evidence>
<name>YBEY_BACAH</name>
<protein>
    <recommendedName>
        <fullName evidence="1">Endoribonuclease YbeY</fullName>
        <ecNumber evidence="1">3.1.-.-</ecNumber>
    </recommendedName>
</protein>
<organism>
    <name type="scientific">Bacillus thuringiensis (strain Al Hakam)</name>
    <dbReference type="NCBI Taxonomy" id="412694"/>
    <lineage>
        <taxon>Bacteria</taxon>
        <taxon>Bacillati</taxon>
        <taxon>Bacillota</taxon>
        <taxon>Bacilli</taxon>
        <taxon>Bacillales</taxon>
        <taxon>Bacillaceae</taxon>
        <taxon>Bacillus</taxon>
        <taxon>Bacillus cereus group</taxon>
    </lineage>
</organism>
<sequence length="156" mass="18062">MSLLIDFIDETEEVKEEYVNLIREILGKAAQMEKIEDGAELSVTFVDNERIREINRDYRDKDQPTDVISFAMEEMGEGEMEIVGVEMPRMLGDLIISIPRAKEQAEEYGHSFDRELGFLALHGFLHLLGYDHMTEEDEKEMFGRQKEILEAFGLGR</sequence>
<proteinExistence type="inferred from homology"/>
<gene>
    <name evidence="1" type="primary">ybeY</name>
    <name type="ordered locus">BALH_3893</name>
</gene>
<dbReference type="EC" id="3.1.-.-" evidence="1"/>
<dbReference type="EMBL" id="CP000485">
    <property type="protein sequence ID" value="ABK87116.1"/>
    <property type="molecule type" value="Genomic_DNA"/>
</dbReference>
<dbReference type="RefSeq" id="WP_000054692.1">
    <property type="nucleotide sequence ID" value="NC_008600.1"/>
</dbReference>
<dbReference type="SMR" id="A0RIS3"/>
<dbReference type="GeneID" id="93006797"/>
<dbReference type="KEGG" id="btl:BALH_3893"/>
<dbReference type="HOGENOM" id="CLU_106710_3_0_9"/>
<dbReference type="GO" id="GO:0005737">
    <property type="term" value="C:cytoplasm"/>
    <property type="evidence" value="ECO:0007669"/>
    <property type="project" value="UniProtKB-SubCell"/>
</dbReference>
<dbReference type="GO" id="GO:0004222">
    <property type="term" value="F:metalloendopeptidase activity"/>
    <property type="evidence" value="ECO:0007669"/>
    <property type="project" value="InterPro"/>
</dbReference>
<dbReference type="GO" id="GO:0004521">
    <property type="term" value="F:RNA endonuclease activity"/>
    <property type="evidence" value="ECO:0007669"/>
    <property type="project" value="UniProtKB-UniRule"/>
</dbReference>
<dbReference type="GO" id="GO:0008270">
    <property type="term" value="F:zinc ion binding"/>
    <property type="evidence" value="ECO:0007669"/>
    <property type="project" value="UniProtKB-UniRule"/>
</dbReference>
<dbReference type="GO" id="GO:0006364">
    <property type="term" value="P:rRNA processing"/>
    <property type="evidence" value="ECO:0007669"/>
    <property type="project" value="UniProtKB-UniRule"/>
</dbReference>
<dbReference type="Gene3D" id="3.40.390.30">
    <property type="entry name" value="Metalloproteases ('zincins'), catalytic domain"/>
    <property type="match status" value="1"/>
</dbReference>
<dbReference type="HAMAP" id="MF_00009">
    <property type="entry name" value="Endoribonucl_YbeY"/>
    <property type="match status" value="1"/>
</dbReference>
<dbReference type="InterPro" id="IPR023091">
    <property type="entry name" value="MetalPrtase_cat_dom_sf_prd"/>
</dbReference>
<dbReference type="InterPro" id="IPR002036">
    <property type="entry name" value="YbeY"/>
</dbReference>
<dbReference type="InterPro" id="IPR020549">
    <property type="entry name" value="YbeY_CS"/>
</dbReference>
<dbReference type="NCBIfam" id="TIGR00043">
    <property type="entry name" value="rRNA maturation RNase YbeY"/>
    <property type="match status" value="1"/>
</dbReference>
<dbReference type="PANTHER" id="PTHR46986">
    <property type="entry name" value="ENDORIBONUCLEASE YBEY, CHLOROPLASTIC"/>
    <property type="match status" value="1"/>
</dbReference>
<dbReference type="PANTHER" id="PTHR46986:SF1">
    <property type="entry name" value="ENDORIBONUCLEASE YBEY, CHLOROPLASTIC"/>
    <property type="match status" value="1"/>
</dbReference>
<dbReference type="Pfam" id="PF02130">
    <property type="entry name" value="YbeY"/>
    <property type="match status" value="1"/>
</dbReference>
<dbReference type="SUPFAM" id="SSF55486">
    <property type="entry name" value="Metalloproteases ('zincins'), catalytic domain"/>
    <property type="match status" value="1"/>
</dbReference>
<dbReference type="PROSITE" id="PS01306">
    <property type="entry name" value="UPF0054"/>
    <property type="match status" value="1"/>
</dbReference>
<reference key="1">
    <citation type="journal article" date="2007" name="J. Bacteriol.">
        <title>The complete genome sequence of Bacillus thuringiensis Al Hakam.</title>
        <authorList>
            <person name="Challacombe J.F."/>
            <person name="Altherr M.R."/>
            <person name="Xie G."/>
            <person name="Bhotika S.S."/>
            <person name="Brown N."/>
            <person name="Bruce D."/>
            <person name="Campbell C.S."/>
            <person name="Campbell M.L."/>
            <person name="Chen J."/>
            <person name="Chertkov O."/>
            <person name="Cleland C."/>
            <person name="Dimitrijevic M."/>
            <person name="Doggett N.A."/>
            <person name="Fawcett J.J."/>
            <person name="Glavina T."/>
            <person name="Goodwin L.A."/>
            <person name="Green L.D."/>
            <person name="Han C.S."/>
            <person name="Hill K.K."/>
            <person name="Hitchcock P."/>
            <person name="Jackson P.J."/>
            <person name="Keim P."/>
            <person name="Kewalramani A.R."/>
            <person name="Longmire J."/>
            <person name="Lucas S."/>
            <person name="Malfatti S."/>
            <person name="Martinez D."/>
            <person name="McMurry K."/>
            <person name="Meincke L.J."/>
            <person name="Misra M."/>
            <person name="Moseman B.L."/>
            <person name="Mundt M."/>
            <person name="Munk A.C."/>
            <person name="Okinaka R.T."/>
            <person name="Parson-Quintana B."/>
            <person name="Reilly L.P."/>
            <person name="Richardson P."/>
            <person name="Robinson D.L."/>
            <person name="Saunders E."/>
            <person name="Tapia R."/>
            <person name="Tesmer J.G."/>
            <person name="Thayer N."/>
            <person name="Thompson L.S."/>
            <person name="Tice H."/>
            <person name="Ticknor L.O."/>
            <person name="Wills P.L."/>
            <person name="Gilna P."/>
            <person name="Brettin T.S."/>
        </authorList>
    </citation>
    <scope>NUCLEOTIDE SEQUENCE [LARGE SCALE GENOMIC DNA]</scope>
    <source>
        <strain>Al Hakam</strain>
    </source>
</reference>
<keyword id="KW-0963">Cytoplasm</keyword>
<keyword id="KW-0255">Endonuclease</keyword>
<keyword id="KW-0378">Hydrolase</keyword>
<keyword id="KW-0479">Metal-binding</keyword>
<keyword id="KW-0540">Nuclease</keyword>
<keyword id="KW-0690">Ribosome biogenesis</keyword>
<keyword id="KW-0698">rRNA processing</keyword>
<keyword id="KW-0862">Zinc</keyword>
<feature type="chain" id="PRO_0000284161" description="Endoribonuclease YbeY">
    <location>
        <begin position="1"/>
        <end position="156"/>
    </location>
</feature>
<feature type="binding site" evidence="1">
    <location>
        <position position="122"/>
    </location>
    <ligand>
        <name>Zn(2+)</name>
        <dbReference type="ChEBI" id="CHEBI:29105"/>
        <note>catalytic</note>
    </ligand>
</feature>
<feature type="binding site" evidence="1">
    <location>
        <position position="126"/>
    </location>
    <ligand>
        <name>Zn(2+)</name>
        <dbReference type="ChEBI" id="CHEBI:29105"/>
        <note>catalytic</note>
    </ligand>
</feature>
<feature type="binding site" evidence="1">
    <location>
        <position position="132"/>
    </location>
    <ligand>
        <name>Zn(2+)</name>
        <dbReference type="ChEBI" id="CHEBI:29105"/>
        <note>catalytic</note>
    </ligand>
</feature>